<proteinExistence type="evidence at protein level"/>
<sequence length="727" mass="81317">MNQKLLKLENLLRFHTIYRQLHSLCQRRALRQWRHGFSSAYPVWTAQLCAWPWPTDVLTGAALSQYRLLVTKKEEGPWKSQLSSTKSKKVVEVWIGMTIEELARAMEKNTDYVYEALLNTDIDIDSLEADSHLDEVWIKEVITKAGMKLKWSKLKQDKVRKNKDAVRRPQADPALLTPRSPVVTIMGHVDHGKTTLLDKFRKTQVAAVETGGITQHIGAFLVSLPSGEKITFLDTPGHAAFSAMRARGAQVTDIVVLVVAADDGVMKQTVESIQHAKDAQVPIILAVNKCDKAEADPEKVKKELLAYDVVCEDYGGDVQAVPVSALTGDNLMALAEATVALAEMLELKADPNGPVEGTVIESFTDKGRGLVTTAIIQRGTLRKGSVLVAGKCWAKVRLMFDENGKTIDEAYPSMPVGITGWRDLPSAGEEILEVESEPRAREVVDWRKYEQEQEKGQEDLKIIEEKRKEHKEAHQKAREKYGHLLWKKRSILRFLERKEQIPLKPKEKRERDSNVLSVIIKGDVDGSVEAILNIIDTYDASHECELELVHFGVGDVSANDVNLAETFDGVIYGFNVNAGNVIQQSAAKKGVKIKLHKIIYRLVEDLQEELSSRLPCAVEEHPVGEASILATFSVTEGKKKVPVAGCRVQKGQLEKQKKFKLTRNGHVIWKGSLTSLKHHKDDISIVKTGMDCGLSLDEDNMEFQVGDRIVCYEEKQIQAKTSWDPGF</sequence>
<organism>
    <name type="scientific">Homo sapiens</name>
    <name type="common">Human</name>
    <dbReference type="NCBI Taxonomy" id="9606"/>
    <lineage>
        <taxon>Eukaryota</taxon>
        <taxon>Metazoa</taxon>
        <taxon>Chordata</taxon>
        <taxon>Craniata</taxon>
        <taxon>Vertebrata</taxon>
        <taxon>Euteleostomi</taxon>
        <taxon>Mammalia</taxon>
        <taxon>Eutheria</taxon>
        <taxon>Euarchontoglires</taxon>
        <taxon>Primates</taxon>
        <taxon>Haplorrhini</taxon>
        <taxon>Catarrhini</taxon>
        <taxon>Hominidae</taxon>
        <taxon>Homo</taxon>
    </lineage>
</organism>
<dbReference type="EMBL" id="L34600">
    <property type="protein sequence ID" value="AAA67038.1"/>
    <property type="molecule type" value="mRNA"/>
</dbReference>
<dbReference type="EMBL" id="AF494407">
    <property type="protein sequence ID" value="AAM14617.1"/>
    <property type="molecule type" value="mRNA"/>
</dbReference>
<dbReference type="EMBL" id="AF495546">
    <property type="protein sequence ID" value="AAM70196.1"/>
    <property type="molecule type" value="Genomic_DNA"/>
</dbReference>
<dbReference type="EMBL" id="AF495543">
    <property type="protein sequence ID" value="AAM70196.1"/>
    <property type="status" value="JOINED"/>
    <property type="molecule type" value="Genomic_DNA"/>
</dbReference>
<dbReference type="EMBL" id="AF495544">
    <property type="protein sequence ID" value="AAM70196.1"/>
    <property type="status" value="JOINED"/>
    <property type="molecule type" value="Genomic_DNA"/>
</dbReference>
<dbReference type="EMBL" id="AF495545">
    <property type="protein sequence ID" value="AAM70196.1"/>
    <property type="status" value="JOINED"/>
    <property type="molecule type" value="Genomic_DNA"/>
</dbReference>
<dbReference type="EMBL" id="AC012358">
    <property type="status" value="NOT_ANNOTATED_CDS"/>
    <property type="molecule type" value="Genomic_DNA"/>
</dbReference>
<dbReference type="EMBL" id="CH471053">
    <property type="protein sequence ID" value="EAX00104.1"/>
    <property type="molecule type" value="Genomic_DNA"/>
</dbReference>
<dbReference type="EMBL" id="CH471053">
    <property type="protein sequence ID" value="EAX00105.1"/>
    <property type="molecule type" value="Genomic_DNA"/>
</dbReference>
<dbReference type="CCDS" id="CCDS1853.1"/>
<dbReference type="PIR" id="A55628">
    <property type="entry name" value="A55628"/>
</dbReference>
<dbReference type="RefSeq" id="NP_001005369.1">
    <property type="nucleotide sequence ID" value="NM_001005369.1"/>
</dbReference>
<dbReference type="RefSeq" id="NP_001307930.1">
    <property type="nucleotide sequence ID" value="NM_001321001.1"/>
</dbReference>
<dbReference type="RefSeq" id="NP_001307931.1">
    <property type="nucleotide sequence ID" value="NM_001321002.1"/>
</dbReference>
<dbReference type="RefSeq" id="NP_001307932.1">
    <property type="nucleotide sequence ID" value="NM_001321003.1"/>
</dbReference>
<dbReference type="RefSeq" id="NP_001307933.1">
    <property type="nucleotide sequence ID" value="NM_001321004.1"/>
</dbReference>
<dbReference type="RefSeq" id="NP_001307934.1">
    <property type="nucleotide sequence ID" value="NM_001321005.1"/>
</dbReference>
<dbReference type="RefSeq" id="NP_002444.2">
    <property type="nucleotide sequence ID" value="NM_002453.2"/>
</dbReference>
<dbReference type="RefSeq" id="XP_005264392.1">
    <property type="nucleotide sequence ID" value="XM_005264335.3"/>
</dbReference>
<dbReference type="RefSeq" id="XP_011531173.1">
    <property type="nucleotide sequence ID" value="XM_011532871.3"/>
</dbReference>
<dbReference type="RefSeq" id="XP_016859651.1">
    <property type="nucleotide sequence ID" value="XM_017004162.3"/>
</dbReference>
<dbReference type="RefSeq" id="XP_016859652.1">
    <property type="nucleotide sequence ID" value="XM_017004163.2"/>
</dbReference>
<dbReference type="RefSeq" id="XP_047300379.1">
    <property type="nucleotide sequence ID" value="XM_047444423.1"/>
</dbReference>
<dbReference type="RefSeq" id="XP_047300380.1">
    <property type="nucleotide sequence ID" value="XM_047444424.1"/>
</dbReference>
<dbReference type="RefSeq" id="XP_047300381.1">
    <property type="nucleotide sequence ID" value="XM_047444425.1"/>
</dbReference>
<dbReference type="RefSeq" id="XP_054198120.1">
    <property type="nucleotide sequence ID" value="XM_054342145.1"/>
</dbReference>
<dbReference type="RefSeq" id="XP_054198121.1">
    <property type="nucleotide sequence ID" value="XM_054342146.1"/>
</dbReference>
<dbReference type="RefSeq" id="XP_054198122.1">
    <property type="nucleotide sequence ID" value="XM_054342147.1"/>
</dbReference>
<dbReference type="RefSeq" id="XP_054198123.1">
    <property type="nucleotide sequence ID" value="XM_054342148.1"/>
</dbReference>
<dbReference type="RefSeq" id="XP_054198124.1">
    <property type="nucleotide sequence ID" value="XM_054342149.1"/>
</dbReference>
<dbReference type="RefSeq" id="XP_054198125.1">
    <property type="nucleotide sequence ID" value="XM_054342150.1"/>
</dbReference>
<dbReference type="PDB" id="6GAW">
    <property type="method" value="EM"/>
    <property type="resolution" value="3.20 A"/>
    <property type="chains" value="BC=78-727"/>
</dbReference>
<dbReference type="PDB" id="6GAZ">
    <property type="method" value="EM"/>
    <property type="resolution" value="3.10 A"/>
    <property type="chains" value="BC=78-727"/>
</dbReference>
<dbReference type="PDB" id="6GB2">
    <property type="method" value="EM"/>
    <property type="resolution" value="3.20 A"/>
    <property type="chains" value="BC=78-727"/>
</dbReference>
<dbReference type="PDB" id="6RW5">
    <property type="method" value="EM"/>
    <property type="resolution" value="3.14 A"/>
    <property type="chains" value="7=37-727"/>
</dbReference>
<dbReference type="PDB" id="7PO2">
    <property type="method" value="EM"/>
    <property type="resolution" value="3.09 A"/>
    <property type="chains" value="7=1-727"/>
</dbReference>
<dbReference type="PDB" id="8QRN">
    <property type="method" value="EM"/>
    <property type="resolution" value="2.98 A"/>
    <property type="chains" value="7=37-727"/>
</dbReference>
<dbReference type="PDBsum" id="6GAW"/>
<dbReference type="PDBsum" id="6GAZ"/>
<dbReference type="PDBsum" id="6GB2"/>
<dbReference type="PDBsum" id="6RW5"/>
<dbReference type="PDBsum" id="7PO2"/>
<dbReference type="PDBsum" id="8QRN"/>
<dbReference type="EMDB" id="EMD-10022"/>
<dbReference type="EMDB" id="EMD-13560"/>
<dbReference type="EMDB" id="EMD-4368"/>
<dbReference type="EMDB" id="EMD-4369"/>
<dbReference type="EMDB" id="EMD-4370"/>
<dbReference type="SMR" id="P46199"/>
<dbReference type="BioGRID" id="110625">
    <property type="interactions" value="351"/>
</dbReference>
<dbReference type="CORUM" id="P46199"/>
<dbReference type="DIP" id="DIP-27596N"/>
<dbReference type="FunCoup" id="P46199">
    <property type="interactions" value="2299"/>
</dbReference>
<dbReference type="IntAct" id="P46199">
    <property type="interactions" value="80"/>
</dbReference>
<dbReference type="MINT" id="P46199"/>
<dbReference type="STRING" id="9606.ENSP00000263629"/>
<dbReference type="GlyGen" id="P46199">
    <property type="glycosylation" value="1 site, 1 O-linked glycan (1 site)"/>
</dbReference>
<dbReference type="iPTMnet" id="P46199"/>
<dbReference type="PhosphoSitePlus" id="P46199"/>
<dbReference type="BioMuta" id="MTIF2"/>
<dbReference type="DMDM" id="223590069"/>
<dbReference type="jPOST" id="P46199"/>
<dbReference type="MassIVE" id="P46199"/>
<dbReference type="PaxDb" id="9606-ENSP00000263629"/>
<dbReference type="PeptideAtlas" id="P46199"/>
<dbReference type="ProteomicsDB" id="55735"/>
<dbReference type="Pumba" id="P46199"/>
<dbReference type="Antibodypedia" id="1037">
    <property type="antibodies" value="82 antibodies from 19 providers"/>
</dbReference>
<dbReference type="DNASU" id="4528"/>
<dbReference type="Ensembl" id="ENST00000263629.9">
    <property type="protein sequence ID" value="ENSP00000263629.4"/>
    <property type="gene ID" value="ENSG00000085760.15"/>
</dbReference>
<dbReference type="Ensembl" id="ENST00000394600.7">
    <property type="protein sequence ID" value="ENSP00000378099.3"/>
    <property type="gene ID" value="ENSG00000085760.15"/>
</dbReference>
<dbReference type="Ensembl" id="ENST00000403721.5">
    <property type="protein sequence ID" value="ENSP00000384481.1"/>
    <property type="gene ID" value="ENSG00000085760.15"/>
</dbReference>
<dbReference type="GeneID" id="4528"/>
<dbReference type="KEGG" id="hsa:4528"/>
<dbReference type="MANE-Select" id="ENST00000263629.9">
    <property type="protein sequence ID" value="ENSP00000263629.4"/>
    <property type="RefSeq nucleotide sequence ID" value="NM_002453.3"/>
    <property type="RefSeq protein sequence ID" value="NP_002444.2"/>
</dbReference>
<dbReference type="UCSC" id="uc002ryo.3">
    <property type="organism name" value="human"/>
</dbReference>
<dbReference type="AGR" id="HGNC:7441"/>
<dbReference type="CTD" id="4528"/>
<dbReference type="DisGeNET" id="4528"/>
<dbReference type="GeneCards" id="MTIF2"/>
<dbReference type="HGNC" id="HGNC:7441">
    <property type="gene designation" value="MTIF2"/>
</dbReference>
<dbReference type="HPA" id="ENSG00000085760">
    <property type="expression patterns" value="Low tissue specificity"/>
</dbReference>
<dbReference type="MIM" id="603766">
    <property type="type" value="gene"/>
</dbReference>
<dbReference type="neXtProt" id="NX_P46199"/>
<dbReference type="OpenTargets" id="ENSG00000085760"/>
<dbReference type="PharmGKB" id="PA31243"/>
<dbReference type="VEuPathDB" id="HostDB:ENSG00000085760"/>
<dbReference type="eggNOG" id="KOG1145">
    <property type="taxonomic scope" value="Eukaryota"/>
</dbReference>
<dbReference type="GeneTree" id="ENSGT00900000141103"/>
<dbReference type="HOGENOM" id="CLU_006301_5_2_1"/>
<dbReference type="InParanoid" id="P46199"/>
<dbReference type="OMA" id="TIVCYQI"/>
<dbReference type="OrthoDB" id="361630at2759"/>
<dbReference type="PAN-GO" id="P46199">
    <property type="GO annotations" value="4 GO annotations based on evolutionary models"/>
</dbReference>
<dbReference type="PhylomeDB" id="P46199"/>
<dbReference type="TreeFam" id="TF105682"/>
<dbReference type="PathwayCommons" id="P46199"/>
<dbReference type="Reactome" id="R-HSA-5368286">
    <property type="pathway name" value="Mitochondrial translation initiation"/>
</dbReference>
<dbReference type="SignaLink" id="P46199"/>
<dbReference type="BioGRID-ORCS" id="4528">
    <property type="hits" value="189 hits in 1158 CRISPR screens"/>
</dbReference>
<dbReference type="ChiTaRS" id="MTIF2">
    <property type="organism name" value="human"/>
</dbReference>
<dbReference type="GeneWiki" id="MTIF2"/>
<dbReference type="GenomeRNAi" id="4528"/>
<dbReference type="Pharos" id="P46199">
    <property type="development level" value="Tbio"/>
</dbReference>
<dbReference type="PRO" id="PR:P46199"/>
<dbReference type="Proteomes" id="UP000005640">
    <property type="component" value="Chromosome 2"/>
</dbReference>
<dbReference type="RNAct" id="P46199">
    <property type="molecule type" value="protein"/>
</dbReference>
<dbReference type="Bgee" id="ENSG00000085760">
    <property type="expression patterns" value="Expressed in esophagus squamous epithelium and 215 other cell types or tissues"/>
</dbReference>
<dbReference type="ExpressionAtlas" id="P46199">
    <property type="expression patterns" value="baseline and differential"/>
</dbReference>
<dbReference type="GO" id="GO:0005737">
    <property type="term" value="C:cytoplasm"/>
    <property type="evidence" value="ECO:0000318"/>
    <property type="project" value="GO_Central"/>
</dbReference>
<dbReference type="GO" id="GO:0005739">
    <property type="term" value="C:mitochondrion"/>
    <property type="evidence" value="ECO:0000314"/>
    <property type="project" value="HPA"/>
</dbReference>
<dbReference type="GO" id="GO:0005654">
    <property type="term" value="C:nucleoplasm"/>
    <property type="evidence" value="ECO:0000314"/>
    <property type="project" value="HPA"/>
</dbReference>
<dbReference type="GO" id="GO:0005525">
    <property type="term" value="F:GTP binding"/>
    <property type="evidence" value="ECO:0007669"/>
    <property type="project" value="UniProtKB-KW"/>
</dbReference>
<dbReference type="GO" id="GO:0003924">
    <property type="term" value="F:GTPase activity"/>
    <property type="evidence" value="ECO:0007669"/>
    <property type="project" value="InterPro"/>
</dbReference>
<dbReference type="GO" id="GO:0043024">
    <property type="term" value="F:ribosomal small subunit binding"/>
    <property type="evidence" value="ECO:0000250"/>
    <property type="project" value="HGNC-UCL"/>
</dbReference>
<dbReference type="GO" id="GO:0003723">
    <property type="term" value="F:RNA binding"/>
    <property type="evidence" value="ECO:0007005"/>
    <property type="project" value="UniProtKB"/>
</dbReference>
<dbReference type="GO" id="GO:0008135">
    <property type="term" value="F:translation factor activity, RNA binding"/>
    <property type="evidence" value="ECO:0000250"/>
    <property type="project" value="HGNC-UCL"/>
</dbReference>
<dbReference type="GO" id="GO:0003743">
    <property type="term" value="F:translation initiation factor activity"/>
    <property type="evidence" value="ECO:0000318"/>
    <property type="project" value="GO_Central"/>
</dbReference>
<dbReference type="GO" id="GO:0070124">
    <property type="term" value="P:mitochondrial translational initiation"/>
    <property type="evidence" value="ECO:0000250"/>
    <property type="project" value="BHF-UCL"/>
</dbReference>
<dbReference type="GO" id="GO:0006446">
    <property type="term" value="P:regulation of translational initiation"/>
    <property type="evidence" value="ECO:0000304"/>
    <property type="project" value="ProtInc"/>
</dbReference>
<dbReference type="GO" id="GO:0032790">
    <property type="term" value="P:ribosome disassembly"/>
    <property type="evidence" value="ECO:0000250"/>
    <property type="project" value="BHF-UCL"/>
</dbReference>
<dbReference type="CDD" id="cd01887">
    <property type="entry name" value="IF2_eIF5B"/>
    <property type="match status" value="1"/>
</dbReference>
<dbReference type="CDD" id="cd03702">
    <property type="entry name" value="IF2_mtIF2_II"/>
    <property type="match status" value="1"/>
</dbReference>
<dbReference type="CDD" id="cd03692">
    <property type="entry name" value="mtIF2_IVc"/>
    <property type="match status" value="1"/>
</dbReference>
<dbReference type="FunFam" id="2.40.30.10:FF:000007">
    <property type="entry name" value="Translation initiation factor IF-2"/>
    <property type="match status" value="1"/>
</dbReference>
<dbReference type="FunFam" id="3.40.50.300:FF:000019">
    <property type="entry name" value="Translation initiation factor IF-2"/>
    <property type="match status" value="1"/>
</dbReference>
<dbReference type="FunFam" id="2.40.30.10:FF:000072">
    <property type="entry name" value="translation initiation factor IF-2, mitochondrial isoform X1"/>
    <property type="match status" value="1"/>
</dbReference>
<dbReference type="FunFam" id="3.40.50.10050:FF:000003">
    <property type="entry name" value="translation initiation factor IF-2, mitochondrial isoform X1"/>
    <property type="match status" value="1"/>
</dbReference>
<dbReference type="Gene3D" id="3.40.50.300">
    <property type="entry name" value="P-loop containing nucleotide triphosphate hydrolases"/>
    <property type="match status" value="1"/>
</dbReference>
<dbReference type="Gene3D" id="2.40.30.10">
    <property type="entry name" value="Translation factors"/>
    <property type="match status" value="2"/>
</dbReference>
<dbReference type="Gene3D" id="3.40.50.10050">
    <property type="entry name" value="Translation initiation factor IF- 2, domain 3"/>
    <property type="match status" value="1"/>
</dbReference>
<dbReference type="HAMAP" id="MF_00100_B">
    <property type="entry name" value="IF_2_B"/>
    <property type="match status" value="1"/>
</dbReference>
<dbReference type="InterPro" id="IPR053905">
    <property type="entry name" value="EF-G-like_DII"/>
</dbReference>
<dbReference type="InterPro" id="IPR044145">
    <property type="entry name" value="IF2_II"/>
</dbReference>
<dbReference type="InterPro" id="IPR027417">
    <property type="entry name" value="P-loop_NTPase"/>
</dbReference>
<dbReference type="InterPro" id="IPR005225">
    <property type="entry name" value="Small_GTP-bd"/>
</dbReference>
<dbReference type="InterPro" id="IPR000795">
    <property type="entry name" value="T_Tr_GTP-bd_dom"/>
</dbReference>
<dbReference type="InterPro" id="IPR000178">
    <property type="entry name" value="TF_IF2_bacterial-like"/>
</dbReference>
<dbReference type="InterPro" id="IPR015760">
    <property type="entry name" value="TIF_IF2"/>
</dbReference>
<dbReference type="InterPro" id="IPR023115">
    <property type="entry name" value="TIF_IF2_dom3"/>
</dbReference>
<dbReference type="InterPro" id="IPR036925">
    <property type="entry name" value="TIF_IF2_dom3_sf"/>
</dbReference>
<dbReference type="InterPro" id="IPR009000">
    <property type="entry name" value="Transl_B-barrel_sf"/>
</dbReference>
<dbReference type="NCBIfam" id="TIGR00231">
    <property type="entry name" value="small_GTP"/>
    <property type="match status" value="1"/>
</dbReference>
<dbReference type="PANTHER" id="PTHR43381:SF20">
    <property type="entry name" value="TRANSLATION INITIATION FACTOR IF-2, MITOCHONDRIAL"/>
    <property type="match status" value="1"/>
</dbReference>
<dbReference type="PANTHER" id="PTHR43381">
    <property type="entry name" value="TRANSLATION INITIATION FACTOR IF-2-RELATED"/>
    <property type="match status" value="1"/>
</dbReference>
<dbReference type="Pfam" id="PF22042">
    <property type="entry name" value="EF-G_D2"/>
    <property type="match status" value="1"/>
</dbReference>
<dbReference type="Pfam" id="PF00009">
    <property type="entry name" value="GTP_EFTU"/>
    <property type="match status" value="1"/>
</dbReference>
<dbReference type="Pfam" id="PF11987">
    <property type="entry name" value="IF-2"/>
    <property type="match status" value="1"/>
</dbReference>
<dbReference type="SUPFAM" id="SSF52156">
    <property type="entry name" value="Initiation factor IF2/eIF5b, domain 3"/>
    <property type="match status" value="1"/>
</dbReference>
<dbReference type="SUPFAM" id="SSF52540">
    <property type="entry name" value="P-loop containing nucleoside triphosphate hydrolases"/>
    <property type="match status" value="1"/>
</dbReference>
<dbReference type="SUPFAM" id="SSF50447">
    <property type="entry name" value="Translation proteins"/>
    <property type="match status" value="2"/>
</dbReference>
<dbReference type="PROSITE" id="PS51722">
    <property type="entry name" value="G_TR_2"/>
    <property type="match status" value="1"/>
</dbReference>
<dbReference type="PROSITE" id="PS01176">
    <property type="entry name" value="IF2"/>
    <property type="match status" value="1"/>
</dbReference>
<reference key="1">
    <citation type="journal article" date="1995" name="J. Biol. Chem.">
        <title>Cloning and sequence analysis of the human mitochondrial translational initiation factor 2 cDNA.</title>
        <authorList>
            <person name="Ma L."/>
            <person name="Spremulli L.L."/>
        </authorList>
    </citation>
    <scope>NUCLEOTIDE SEQUENCE [MRNA]</scope>
    <scope>VARIANTS ASN-59 AND ILE-556</scope>
    <source>
        <tissue>Liver</tissue>
    </source>
</reference>
<reference key="2">
    <citation type="journal article" date="2003" name="Biochim. Biophys. Acta">
        <title>The human mitochondrial translation initiation factor 2 gene (MTIF2): transcriptional analysis and identification of a pseudogene.</title>
        <authorList>
            <person name="Overman R.G. Jr."/>
            <person name="Enderle P.J."/>
            <person name="Farrow J.M. III"/>
            <person name="Wiley J.E."/>
            <person name="Farwell M.A."/>
        </authorList>
    </citation>
    <scope>NUCLEOTIDE SEQUENCE [GENOMIC DNA / MRNA]</scope>
    <scope>VARIANTS ASN-59 AND ILE-556</scope>
    <source>
        <tissue>Heart</tissue>
    </source>
</reference>
<reference key="3">
    <citation type="journal article" date="2005" name="Nature">
        <title>Generation and annotation of the DNA sequences of human chromosomes 2 and 4.</title>
        <authorList>
            <person name="Hillier L.W."/>
            <person name="Graves T.A."/>
            <person name="Fulton R.S."/>
            <person name="Fulton L.A."/>
            <person name="Pepin K.H."/>
            <person name="Minx P."/>
            <person name="Wagner-McPherson C."/>
            <person name="Layman D."/>
            <person name="Wylie K."/>
            <person name="Sekhon M."/>
            <person name="Becker M.C."/>
            <person name="Fewell G.A."/>
            <person name="Delehaunty K.D."/>
            <person name="Miner T.L."/>
            <person name="Nash W.E."/>
            <person name="Kremitzki C."/>
            <person name="Oddy L."/>
            <person name="Du H."/>
            <person name="Sun H."/>
            <person name="Bradshaw-Cordum H."/>
            <person name="Ali J."/>
            <person name="Carter J."/>
            <person name="Cordes M."/>
            <person name="Harris A."/>
            <person name="Isak A."/>
            <person name="van Brunt A."/>
            <person name="Nguyen C."/>
            <person name="Du F."/>
            <person name="Courtney L."/>
            <person name="Kalicki J."/>
            <person name="Ozersky P."/>
            <person name="Abbott S."/>
            <person name="Armstrong J."/>
            <person name="Belter E.A."/>
            <person name="Caruso L."/>
            <person name="Cedroni M."/>
            <person name="Cotton M."/>
            <person name="Davidson T."/>
            <person name="Desai A."/>
            <person name="Elliott G."/>
            <person name="Erb T."/>
            <person name="Fronick C."/>
            <person name="Gaige T."/>
            <person name="Haakenson W."/>
            <person name="Haglund K."/>
            <person name="Holmes A."/>
            <person name="Harkins R."/>
            <person name="Kim K."/>
            <person name="Kruchowski S.S."/>
            <person name="Strong C.M."/>
            <person name="Grewal N."/>
            <person name="Goyea E."/>
            <person name="Hou S."/>
            <person name="Levy A."/>
            <person name="Martinka S."/>
            <person name="Mead K."/>
            <person name="McLellan M.D."/>
            <person name="Meyer R."/>
            <person name="Randall-Maher J."/>
            <person name="Tomlinson C."/>
            <person name="Dauphin-Kohlberg S."/>
            <person name="Kozlowicz-Reilly A."/>
            <person name="Shah N."/>
            <person name="Swearengen-Shahid S."/>
            <person name="Snider J."/>
            <person name="Strong J.T."/>
            <person name="Thompson J."/>
            <person name="Yoakum M."/>
            <person name="Leonard S."/>
            <person name="Pearman C."/>
            <person name="Trani L."/>
            <person name="Radionenko M."/>
            <person name="Waligorski J.E."/>
            <person name="Wang C."/>
            <person name="Rock S.M."/>
            <person name="Tin-Wollam A.-M."/>
            <person name="Maupin R."/>
            <person name="Latreille P."/>
            <person name="Wendl M.C."/>
            <person name="Yang S.-P."/>
            <person name="Pohl C."/>
            <person name="Wallis J.W."/>
            <person name="Spieth J."/>
            <person name="Bieri T.A."/>
            <person name="Berkowicz N."/>
            <person name="Nelson J.O."/>
            <person name="Osborne J."/>
            <person name="Ding L."/>
            <person name="Meyer R."/>
            <person name="Sabo A."/>
            <person name="Shotland Y."/>
            <person name="Sinha P."/>
            <person name="Wohldmann P.E."/>
            <person name="Cook L.L."/>
            <person name="Hickenbotham M.T."/>
            <person name="Eldred J."/>
            <person name="Williams D."/>
            <person name="Jones T.A."/>
            <person name="She X."/>
            <person name="Ciccarelli F.D."/>
            <person name="Izaurralde E."/>
            <person name="Taylor J."/>
            <person name="Schmutz J."/>
            <person name="Myers R.M."/>
            <person name="Cox D.R."/>
            <person name="Huang X."/>
            <person name="McPherson J.D."/>
            <person name="Mardis E.R."/>
            <person name="Clifton S.W."/>
            <person name="Warren W.C."/>
            <person name="Chinwalla A.T."/>
            <person name="Eddy S.R."/>
            <person name="Marra M.A."/>
            <person name="Ovcharenko I."/>
            <person name="Furey T.S."/>
            <person name="Miller W."/>
            <person name="Eichler E.E."/>
            <person name="Bork P."/>
            <person name="Suyama M."/>
            <person name="Torrents D."/>
            <person name="Waterston R.H."/>
            <person name="Wilson R.K."/>
        </authorList>
    </citation>
    <scope>NUCLEOTIDE SEQUENCE [LARGE SCALE GENOMIC DNA]</scope>
</reference>
<reference key="4">
    <citation type="submission" date="2005-09" db="EMBL/GenBank/DDBJ databases">
        <authorList>
            <person name="Mural R.J."/>
            <person name="Istrail S."/>
            <person name="Sutton G.G."/>
            <person name="Florea L."/>
            <person name="Halpern A.L."/>
            <person name="Mobarry C.M."/>
            <person name="Lippert R."/>
            <person name="Walenz B."/>
            <person name="Shatkay H."/>
            <person name="Dew I."/>
            <person name="Miller J.R."/>
            <person name="Flanigan M.J."/>
            <person name="Edwards N.J."/>
            <person name="Bolanos R."/>
            <person name="Fasulo D."/>
            <person name="Halldorsson B.V."/>
            <person name="Hannenhalli S."/>
            <person name="Turner R."/>
            <person name="Yooseph S."/>
            <person name="Lu F."/>
            <person name="Nusskern D.R."/>
            <person name="Shue B.C."/>
            <person name="Zheng X.H."/>
            <person name="Zhong F."/>
            <person name="Delcher A.L."/>
            <person name="Huson D.H."/>
            <person name="Kravitz S.A."/>
            <person name="Mouchard L."/>
            <person name="Reinert K."/>
            <person name="Remington K.A."/>
            <person name="Clark A.G."/>
            <person name="Waterman M.S."/>
            <person name="Eichler E.E."/>
            <person name="Adams M.D."/>
            <person name="Hunkapiller M.W."/>
            <person name="Myers E.W."/>
            <person name="Venter J.C."/>
        </authorList>
    </citation>
    <scope>NUCLEOTIDE SEQUENCE [LARGE SCALE GENOMIC DNA]</scope>
</reference>
<reference key="5">
    <citation type="journal article" date="2011" name="BMC Syst. Biol.">
        <title>Initial characterization of the human central proteome.</title>
        <authorList>
            <person name="Burkard T.R."/>
            <person name="Planyavsky M."/>
            <person name="Kaupe I."/>
            <person name="Breitwieser F.P."/>
            <person name="Buerckstuemmer T."/>
            <person name="Bennett K.L."/>
            <person name="Superti-Furga G."/>
            <person name="Colinge J."/>
        </authorList>
    </citation>
    <scope>IDENTIFICATION BY MASS SPECTROMETRY [LARGE SCALE ANALYSIS]</scope>
</reference>
<reference key="6">
    <citation type="journal article" date="2015" name="Proteomics">
        <title>N-terminome analysis of the human mitochondrial proteome.</title>
        <authorList>
            <person name="Vaca Jacome A.S."/>
            <person name="Rabilloud T."/>
            <person name="Schaeffer-Reiss C."/>
            <person name="Rompais M."/>
            <person name="Ayoub D."/>
            <person name="Lane L."/>
            <person name="Bairoch A."/>
            <person name="Van Dorsselaer A."/>
            <person name="Carapito C."/>
        </authorList>
    </citation>
    <scope>IDENTIFICATION BY MASS SPECTROMETRY [LARGE SCALE ANALYSIS]</scope>
</reference>
<protein>
    <recommendedName>
        <fullName>Translation initiation factor IF-2, mitochondrial</fullName>
        <shortName>IF-2(Mt)</shortName>
        <shortName>IF-2Mt</shortName>
        <shortName>IF2(mt)</shortName>
    </recommendedName>
</protein>
<comment type="function">
    <text>One of the essential components for the initiation of protein synthesis. Protects formylmethionyl-tRNA from spontaneous hydrolysis and promotes its binding to the 30S ribosomal subunits. Also involved in the hydrolysis of GTP during the formation of the 70S ribosomal complex.</text>
</comment>
<comment type="subunit">
    <text>Monomer.</text>
</comment>
<comment type="subcellular location">
    <subcellularLocation>
        <location>Mitochondrion</location>
    </subcellularLocation>
</comment>
<comment type="tissue specificity">
    <text>Expressed in all tissues examined. Highest level in skeletal muscle.</text>
</comment>
<comment type="similarity">
    <text evidence="6">Belongs to the TRAFAC class translation factor GTPase superfamily. Classic translation factor GTPase family. IF-2 subfamily.</text>
</comment>
<accession>P46199</accession>
<accession>D6W5D0</accession>
<feature type="transit peptide" description="Mitochondrion" evidence="3">
    <location>
        <begin position="1"/>
        <end position="29"/>
    </location>
</feature>
<feature type="chain" id="PRO_0000014480" description="Translation initiation factor IF-2, mitochondrial">
    <location>
        <begin position="30"/>
        <end position="727"/>
    </location>
</feature>
<feature type="domain" description="tr-type G">
    <location>
        <begin position="178"/>
        <end position="348"/>
    </location>
</feature>
<feature type="region of interest" description="G1" evidence="1">
    <location>
        <begin position="187"/>
        <end position="194"/>
    </location>
</feature>
<feature type="region of interest" description="G2" evidence="1">
    <location>
        <begin position="212"/>
        <end position="216"/>
    </location>
</feature>
<feature type="region of interest" description="G3" evidence="1">
    <location>
        <begin position="234"/>
        <end position="237"/>
    </location>
</feature>
<feature type="region of interest" description="G4" evidence="1">
    <location>
        <begin position="288"/>
        <end position="291"/>
    </location>
</feature>
<feature type="region of interest" description="G5" evidence="1">
    <location>
        <begin position="324"/>
        <end position="326"/>
    </location>
</feature>
<feature type="binding site" evidence="1">
    <location>
        <begin position="187"/>
        <end position="194"/>
    </location>
    <ligand>
        <name>GTP</name>
        <dbReference type="ChEBI" id="CHEBI:37565"/>
    </ligand>
</feature>
<feature type="binding site" evidence="1">
    <location>
        <begin position="234"/>
        <end position="237"/>
    </location>
    <ligand>
        <name>GTP</name>
        <dbReference type="ChEBI" id="CHEBI:37565"/>
    </ligand>
</feature>
<feature type="binding site" evidence="1">
    <location>
        <begin position="288"/>
        <end position="291"/>
    </location>
    <ligand>
        <name>GTP</name>
        <dbReference type="ChEBI" id="CHEBI:37565"/>
    </ligand>
</feature>
<feature type="modified residue" description="Phosphothreonine" evidence="2">
    <location>
        <position position="688"/>
    </location>
</feature>
<feature type="sequence variant" id="VAR_054428" description="In dbSNP:rs1056445." evidence="4 5">
    <original>T</original>
    <variation>N</variation>
    <location>
        <position position="59"/>
    </location>
</feature>
<feature type="sequence variant" id="VAR_014883" description="In dbSNP:rs11357." evidence="4 5">
    <original>V</original>
    <variation>I</variation>
    <location>
        <position position="556"/>
    </location>
</feature>
<feature type="turn" evidence="7">
    <location>
        <begin position="173"/>
        <end position="175"/>
    </location>
</feature>
<feature type="strand" evidence="7">
    <location>
        <begin position="182"/>
        <end position="187"/>
    </location>
</feature>
<feature type="helix" evidence="7">
    <location>
        <begin position="193"/>
        <end position="201"/>
    </location>
</feature>
<feature type="strand" evidence="7">
    <location>
        <begin position="206"/>
        <end position="210"/>
    </location>
</feature>
<feature type="strand" evidence="7">
    <location>
        <begin position="218"/>
        <end position="223"/>
    </location>
</feature>
<feature type="strand" evidence="7">
    <location>
        <begin position="229"/>
        <end position="234"/>
    </location>
</feature>
<feature type="helix" evidence="7">
    <location>
        <begin position="239"/>
        <end position="241"/>
    </location>
</feature>
<feature type="helix" evidence="7">
    <location>
        <begin position="242"/>
        <end position="251"/>
    </location>
</feature>
<feature type="strand" evidence="7">
    <location>
        <begin position="253"/>
        <end position="258"/>
    </location>
</feature>
<feature type="turn" evidence="7">
    <location>
        <begin position="261"/>
        <end position="263"/>
    </location>
</feature>
<feature type="helix" evidence="7">
    <location>
        <begin position="267"/>
        <end position="279"/>
    </location>
</feature>
<feature type="strand" evidence="7">
    <location>
        <begin position="283"/>
        <end position="287"/>
    </location>
</feature>
<feature type="helix" evidence="7">
    <location>
        <begin position="297"/>
        <end position="306"/>
    </location>
</feature>
<feature type="helix" evidence="7">
    <location>
        <begin position="312"/>
        <end position="314"/>
    </location>
</feature>
<feature type="strand" evidence="7">
    <location>
        <begin position="317"/>
        <end position="322"/>
    </location>
</feature>
<feature type="turn" evidence="7">
    <location>
        <begin position="325"/>
        <end position="328"/>
    </location>
</feature>
<feature type="helix" evidence="7">
    <location>
        <begin position="331"/>
        <end position="345"/>
    </location>
</feature>
<feature type="strand" evidence="7">
    <location>
        <begin position="352"/>
        <end position="354"/>
    </location>
</feature>
<feature type="strand" evidence="7">
    <location>
        <begin position="356"/>
        <end position="365"/>
    </location>
</feature>
<feature type="turn" evidence="7">
    <location>
        <begin position="366"/>
        <end position="368"/>
    </location>
</feature>
<feature type="strand" evidence="7">
    <location>
        <begin position="369"/>
        <end position="379"/>
    </location>
</feature>
<feature type="strand" evidence="7">
    <location>
        <begin position="386"/>
        <end position="389"/>
    </location>
</feature>
<feature type="strand" evidence="7">
    <location>
        <begin position="392"/>
        <end position="395"/>
    </location>
</feature>
<feature type="strand" evidence="7">
    <location>
        <begin position="415"/>
        <end position="419"/>
    </location>
</feature>
<feature type="strand" evidence="7">
    <location>
        <begin position="421"/>
        <end position="423"/>
    </location>
</feature>
<feature type="strand" evidence="7">
    <location>
        <begin position="430"/>
        <end position="435"/>
    </location>
</feature>
<feature type="helix" evidence="7">
    <location>
        <begin position="437"/>
        <end position="478"/>
    </location>
</feature>
<feature type="helix" evidence="7">
    <location>
        <begin position="486"/>
        <end position="497"/>
    </location>
</feature>
<feature type="strand" evidence="7">
    <location>
        <begin position="513"/>
        <end position="524"/>
    </location>
</feature>
<feature type="helix" evidence="7">
    <location>
        <begin position="525"/>
        <end position="535"/>
    </location>
</feature>
<feature type="turn" evidence="7">
    <location>
        <begin position="541"/>
        <end position="543"/>
    </location>
</feature>
<feature type="strand" evidence="7">
    <location>
        <begin position="545"/>
        <end position="555"/>
    </location>
</feature>
<feature type="helix" evidence="7">
    <location>
        <begin position="558"/>
        <end position="567"/>
    </location>
</feature>
<feature type="strand" evidence="7">
    <location>
        <begin position="570"/>
        <end position="575"/>
    </location>
</feature>
<feature type="helix" evidence="7">
    <location>
        <begin position="580"/>
        <end position="589"/>
    </location>
</feature>
<feature type="strand" evidence="7">
    <location>
        <begin position="592"/>
        <end position="598"/>
    </location>
</feature>
<feature type="helix" evidence="7">
    <location>
        <begin position="599"/>
        <end position="613"/>
    </location>
</feature>
<feature type="strand" evidence="7">
    <location>
        <begin position="617"/>
        <end position="636"/>
    </location>
</feature>
<feature type="strand" evidence="7">
    <location>
        <begin position="639"/>
        <end position="651"/>
    </location>
</feature>
<feature type="strand" evidence="7">
    <location>
        <begin position="653"/>
        <end position="663"/>
    </location>
</feature>
<feature type="strand" evidence="7">
    <location>
        <begin position="666"/>
        <end position="671"/>
    </location>
</feature>
<feature type="strand" evidence="7">
    <location>
        <begin position="673"/>
        <end position="678"/>
    </location>
</feature>
<feature type="strand" evidence="7">
    <location>
        <begin position="684"/>
        <end position="686"/>
    </location>
</feature>
<feature type="strand" evidence="7">
    <location>
        <begin position="691"/>
        <end position="697"/>
    </location>
</feature>
<feature type="strand" evidence="7">
    <location>
        <begin position="708"/>
        <end position="717"/>
    </location>
</feature>
<evidence type="ECO:0000250" key="1"/>
<evidence type="ECO:0000250" key="2">
    <source>
        <dbReference type="UniProtKB" id="Q91YJ5"/>
    </source>
</evidence>
<evidence type="ECO:0000255" key="3"/>
<evidence type="ECO:0000269" key="4">
    <source>
    </source>
</evidence>
<evidence type="ECO:0000269" key="5">
    <source>
    </source>
</evidence>
<evidence type="ECO:0000305" key="6"/>
<evidence type="ECO:0007829" key="7">
    <source>
        <dbReference type="PDB" id="8QRN"/>
    </source>
</evidence>
<name>IF2M_HUMAN</name>
<gene>
    <name type="primary">MTIF2</name>
</gene>
<keyword id="KW-0002">3D-structure</keyword>
<keyword id="KW-0342">GTP-binding</keyword>
<keyword id="KW-0396">Initiation factor</keyword>
<keyword id="KW-0496">Mitochondrion</keyword>
<keyword id="KW-0547">Nucleotide-binding</keyword>
<keyword id="KW-0597">Phosphoprotein</keyword>
<keyword id="KW-0648">Protein biosynthesis</keyword>
<keyword id="KW-1267">Proteomics identification</keyword>
<keyword id="KW-1185">Reference proteome</keyword>
<keyword id="KW-0809">Transit peptide</keyword>